<keyword id="KW-0119">Carbohydrate metabolism</keyword>
<keyword id="KW-1003">Cell membrane</keyword>
<keyword id="KW-0328">Glycosyltransferase</keyword>
<keyword id="KW-0444">Lipid biosynthesis</keyword>
<keyword id="KW-0443">Lipid metabolism</keyword>
<keyword id="KW-0472">Membrane</keyword>
<keyword id="KW-0808">Transferase</keyword>
<sequence length="391" mass="44918">MVTQNKKILIITGSFGNGHLQVTQSVVNQLNEMNLSHLSVIEHDLFMEAHPILTSICKKWYINSFKYFRNMYKNFYYSRPDELDKCFYKYYGLNKLINLLLKEKPDLILLTFPTPVMSVLTEQFNINIPIATVMTDYRLQKNWITPNSHRYYVATDDTKRDFVNAGIPASDIKVTGIPISDKFESDIDKVAWLKKHNLNPDKPTILMSAGAFGVSKGFDYMIDNILQKSPQSQIVMVCGRSKGLKRTLEMQFKSYDNVLILGYTKHMNEWMASSQLMITKPGGITISEGLTRSLPMIFLNPAPGQELENALYFQDKSYGKIANTPEEAIDIVSDLTNHEYRLQAMTNKMTEEKVNHSTYRLCTDLLNILDSSSQQQEIYGKVPLYARFFVK</sequence>
<organism>
    <name type="scientific">Staphylococcus haemolyticus (strain JCSC1435)</name>
    <dbReference type="NCBI Taxonomy" id="279808"/>
    <lineage>
        <taxon>Bacteria</taxon>
        <taxon>Bacillati</taxon>
        <taxon>Bacillota</taxon>
        <taxon>Bacilli</taxon>
        <taxon>Bacillales</taxon>
        <taxon>Staphylococcaceae</taxon>
        <taxon>Staphylococcus</taxon>
    </lineage>
</organism>
<proteinExistence type="inferred from homology"/>
<reference key="1">
    <citation type="journal article" date="2005" name="J. Bacteriol.">
        <title>Whole-genome sequencing of Staphylococcus haemolyticus uncovers the extreme plasticity of its genome and the evolution of human-colonizing staphylococcal species.</title>
        <authorList>
            <person name="Takeuchi F."/>
            <person name="Watanabe S."/>
            <person name="Baba T."/>
            <person name="Yuzawa H."/>
            <person name="Ito T."/>
            <person name="Morimoto Y."/>
            <person name="Kuroda M."/>
            <person name="Cui L."/>
            <person name="Takahashi M."/>
            <person name="Ankai A."/>
            <person name="Baba S."/>
            <person name="Fukui S."/>
            <person name="Lee J.C."/>
            <person name="Hiramatsu K."/>
        </authorList>
    </citation>
    <scope>NUCLEOTIDE SEQUENCE [LARGE SCALE GENOMIC DNA]</scope>
    <source>
        <strain>JCSC1435</strain>
    </source>
</reference>
<feature type="chain" id="PRO_0000308462" description="Processive diacylglycerol beta-glucosyltransferase">
    <location>
        <begin position="1"/>
        <end position="391"/>
    </location>
</feature>
<dbReference type="EC" id="2.4.1.315"/>
<dbReference type="EMBL" id="AP006716">
    <property type="protein sequence ID" value="BAE05251.1"/>
    <property type="molecule type" value="Genomic_DNA"/>
</dbReference>
<dbReference type="RefSeq" id="WP_011276212.1">
    <property type="nucleotide sequence ID" value="NC_007168.1"/>
</dbReference>
<dbReference type="SMR" id="Q4L524"/>
<dbReference type="CAZy" id="GT28">
    <property type="family name" value="Glycosyltransferase Family 28"/>
</dbReference>
<dbReference type="KEGG" id="sha:SH1942"/>
<dbReference type="eggNOG" id="COG0707">
    <property type="taxonomic scope" value="Bacteria"/>
</dbReference>
<dbReference type="HOGENOM" id="CLU_028367_0_1_9"/>
<dbReference type="OrthoDB" id="9815663at2"/>
<dbReference type="UniPathway" id="UPA00894"/>
<dbReference type="Proteomes" id="UP000000543">
    <property type="component" value="Chromosome"/>
</dbReference>
<dbReference type="GO" id="GO:0005886">
    <property type="term" value="C:plasma membrane"/>
    <property type="evidence" value="ECO:0007669"/>
    <property type="project" value="UniProtKB-SubCell"/>
</dbReference>
<dbReference type="GO" id="GO:0047228">
    <property type="term" value="F:1,2-diacylglycerol 3-glucosyltransferase activity"/>
    <property type="evidence" value="ECO:0007669"/>
    <property type="project" value="UniProtKB-UniRule"/>
</dbReference>
<dbReference type="GO" id="GO:0009246">
    <property type="term" value="P:enterobacterial common antigen biosynthetic process"/>
    <property type="evidence" value="ECO:0007669"/>
    <property type="project" value="UniProtKB-UniPathway"/>
</dbReference>
<dbReference type="GO" id="GO:0009247">
    <property type="term" value="P:glycolipid biosynthetic process"/>
    <property type="evidence" value="ECO:0007669"/>
    <property type="project" value="UniProtKB-UniRule"/>
</dbReference>
<dbReference type="GO" id="GO:0070395">
    <property type="term" value="P:lipoteichoic acid biosynthetic process"/>
    <property type="evidence" value="ECO:0007669"/>
    <property type="project" value="UniProtKB-UniRule"/>
</dbReference>
<dbReference type="CDD" id="cd17507">
    <property type="entry name" value="GT28_Beta-DGS-like"/>
    <property type="match status" value="1"/>
</dbReference>
<dbReference type="Gene3D" id="3.40.50.2000">
    <property type="entry name" value="Glycogen Phosphorylase B"/>
    <property type="match status" value="1"/>
</dbReference>
<dbReference type="HAMAP" id="MF_01280">
    <property type="entry name" value="Diacylglyc_glucosyltr"/>
    <property type="match status" value="1"/>
</dbReference>
<dbReference type="InterPro" id="IPR009695">
    <property type="entry name" value="Diacylglyc_glucosyltr_N"/>
</dbReference>
<dbReference type="InterPro" id="IPR007235">
    <property type="entry name" value="Glyco_trans_28_C"/>
</dbReference>
<dbReference type="InterPro" id="IPR050519">
    <property type="entry name" value="Glycosyltransf_28_UgtP"/>
</dbReference>
<dbReference type="InterPro" id="IPR023589">
    <property type="entry name" value="Pro_diacylglycrl_glcsylTrfase"/>
</dbReference>
<dbReference type="NCBIfam" id="NF010134">
    <property type="entry name" value="PRK13608.1"/>
    <property type="match status" value="1"/>
</dbReference>
<dbReference type="PANTHER" id="PTHR43025">
    <property type="entry name" value="MONOGALACTOSYLDIACYLGLYCEROL SYNTHASE"/>
    <property type="match status" value="1"/>
</dbReference>
<dbReference type="PANTHER" id="PTHR43025:SF3">
    <property type="entry name" value="MONOGALACTOSYLDIACYLGLYCEROL SYNTHASE 1, CHLOROPLASTIC"/>
    <property type="match status" value="1"/>
</dbReference>
<dbReference type="Pfam" id="PF04101">
    <property type="entry name" value="Glyco_tran_28_C"/>
    <property type="match status" value="1"/>
</dbReference>
<dbReference type="Pfam" id="PF06925">
    <property type="entry name" value="MGDG_synth"/>
    <property type="match status" value="1"/>
</dbReference>
<dbReference type="SUPFAM" id="SSF53756">
    <property type="entry name" value="UDP-Glycosyltransferase/glycogen phosphorylase"/>
    <property type="match status" value="1"/>
</dbReference>
<evidence type="ECO:0000255" key="1">
    <source>
        <dbReference type="HAMAP-Rule" id="MF_01280"/>
    </source>
</evidence>
<comment type="function">
    <text evidence="1">Processive glucosyltransferase involved in the biosynthesis of both the bilayer- and non-bilayer-forming membrane glucolipids. Is able to successively transfer two glucosyl residues to diacylglycerol (DAG), thereby catalyzing the formation of beta-monoglucosyl-DAG (3-O-(beta-D-glucopyranosyl)-1,2-diacyl-sn-glycerol) and beta-diglucosyl-DAG (3-O-(beta-D-glucopyranosyl-beta-(1-&gt;6)-D-glucopyranosyl)-1,2-diacyl-sn-glycerol). Beta-diglucosyl-DAG is the predominant glycolipid found in Bacillales and is also used as a membrane anchor for lipoteichoic acid (LTA).</text>
</comment>
<comment type="catalytic activity">
    <reaction>
        <text>a 1,2-diacyl-3-O-(beta-D-glucopyranosyl)-sn-glycerol + UDP-alpha-D-glucose = a 1,2-diacyl-3-O-(beta-D-Glc-(1-&gt;6)-beta-D-Glc)-sn-glycerol + UDP + H(+)</text>
        <dbReference type="Rhea" id="RHEA:39031"/>
        <dbReference type="ChEBI" id="CHEBI:15378"/>
        <dbReference type="ChEBI" id="CHEBI:58223"/>
        <dbReference type="ChEBI" id="CHEBI:58885"/>
        <dbReference type="ChEBI" id="CHEBI:75799"/>
        <dbReference type="ChEBI" id="CHEBI:76264"/>
        <dbReference type="EC" id="2.4.1.315"/>
    </reaction>
</comment>
<comment type="catalytic activity">
    <reaction evidence="1">
        <text>a 1,2-diacyl-sn-glycerol + UDP-alpha-D-glucose = a 1,2-diacyl-3-O-(beta-D-glucopyranosyl)-sn-glycerol + UDP + H(+)</text>
        <dbReference type="Rhea" id="RHEA:17285"/>
        <dbReference type="ChEBI" id="CHEBI:15378"/>
        <dbReference type="ChEBI" id="CHEBI:17815"/>
        <dbReference type="ChEBI" id="CHEBI:58223"/>
        <dbReference type="ChEBI" id="CHEBI:58885"/>
        <dbReference type="ChEBI" id="CHEBI:75799"/>
    </reaction>
</comment>
<comment type="pathway">
    <text evidence="1">Glycolipid metabolism; diglucosyl-diacylglycerol biosynthesis.</text>
</comment>
<comment type="subcellular location">
    <subcellularLocation>
        <location evidence="1">Cell membrane</location>
    </subcellularLocation>
</comment>
<comment type="similarity">
    <text evidence="1">Belongs to the glycosyltransferase 28 family. UgtP subfamily.</text>
</comment>
<gene>
    <name evidence="1" type="primary">ugtP</name>
    <name type="ordered locus">SH1942</name>
</gene>
<name>UGTP_STAHJ</name>
<protein>
    <recommendedName>
        <fullName evidence="1">Processive diacylglycerol beta-glucosyltransferase</fullName>
        <ecNumber>2.4.1.315</ecNumber>
    </recommendedName>
    <alternativeName>
        <fullName evidence="1">Beta-diglucosyldiacylglycerol synthase</fullName>
        <shortName evidence="1">Beta-DGS</shortName>
        <shortName evidence="1">DGlcDAG synthase</shortName>
        <shortName evidence="1">Glc2-DAG synthase</shortName>
    </alternativeName>
    <alternativeName>
        <fullName evidence="1">Beta-gentiobiosyldiacylglycerol synthase</fullName>
    </alternativeName>
    <alternativeName>
        <fullName evidence="1">Beta-monoglucosyldiacylglycerol synthase</fullName>
        <shortName evidence="1">Beta-MGS</shortName>
        <shortName evidence="1">MGlcDAG synthase</shortName>
    </alternativeName>
    <alternativeName>
        <fullName>Diglucosyl diacylglycerol synthase (1,6-linking)</fullName>
    </alternativeName>
    <alternativeName>
        <fullName evidence="1">Glucosyl-beta-1,6-glucosyldiacylglycerol synthase</fullName>
    </alternativeName>
    <alternativeName>
        <fullName evidence="1">UDP glucosyltransferase</fullName>
    </alternativeName>
    <alternativeName>
        <fullName evidence="1">UDP-glucose:1,2-diacylglycerol-3-beta-D-glucosyltransferase</fullName>
    </alternativeName>
</protein>
<accession>Q4L524</accession>